<geneLocation type="cyanelle"/>
<name>YCF49_CYAPA</name>
<organism>
    <name type="scientific">Cyanophora paradoxa</name>
    <dbReference type="NCBI Taxonomy" id="2762"/>
    <lineage>
        <taxon>Eukaryota</taxon>
        <taxon>Glaucocystophyceae</taxon>
        <taxon>Cyanophoraceae</taxon>
        <taxon>Cyanophora</taxon>
    </lineage>
</organism>
<reference key="1">
    <citation type="journal article" date="1990" name="J. Mol. Evol.">
        <title>The nucleotide sequence of five ribosomal protein genes from the cyanelles of Cyanophora paradoxa: implications concerning the phylogenetic relationship between cyanelles and chloroplasts.</title>
        <authorList>
            <person name="Evrard J.L."/>
            <person name="Kuntz M."/>
            <person name="Weil J.H."/>
        </authorList>
    </citation>
    <scope>NUCLEOTIDE SEQUENCE [GENOMIC DNA]</scope>
    <source>
        <strain>UTEX LB 555 / Pringsheim</strain>
    </source>
</reference>
<reference key="2">
    <citation type="journal article" date="1995" name="Plant Mol. Biol. Rep.">
        <title>Nucleotide sequence of the cyanelle DNA from Cyanophora paradoxa.</title>
        <authorList>
            <person name="Stirewalt V.L."/>
            <person name="Michalowski C.B."/>
            <person name="Loeffelhardt W."/>
            <person name="Bohnert H.J."/>
            <person name="Bryant D.A."/>
        </authorList>
    </citation>
    <scope>NUCLEOTIDE SEQUENCE [LARGE SCALE GENOMIC DNA]</scope>
    <source>
        <strain>UTEX LB 555 / Pringsheim</strain>
    </source>
</reference>
<reference key="3">
    <citation type="book" date="1997" name="Eukaryotism and symbiosis">
        <title>The complete sequence of the cyanelle genome of Cyanophora paradoxa: the genetic complexity of a primitive plastid.</title>
        <editorList>
            <person name="Schenk H.E.A."/>
            <person name="Herrmann R."/>
            <person name="Jeon K.W."/>
            <person name="Mueller N.E."/>
            <person name="Schwemmler W."/>
        </editorList>
        <authorList>
            <person name="Loeffelhardt W."/>
            <person name="Stirewalt V.L."/>
            <person name="Michalowski C.B."/>
            <person name="Annarella M."/>
            <person name="Farley J.Y."/>
            <person name="Schluchter W.M."/>
            <person name="Chung S."/>
            <person name="Newmann-Spallart C."/>
            <person name="Steiner J.M."/>
            <person name="Jakowitsch J."/>
            <person name="Bohnert H.J."/>
            <person name="Bryant D.A."/>
        </authorList>
    </citation>
    <scope>NUCLEOTIDE SEQUENCE [LARGE SCALE GENOMIC DNA]</scope>
    <source>
        <strain>UTEX LB 555 / Pringsheim</strain>
    </source>
</reference>
<comment type="subcellular location">
    <subcellularLocation>
        <location evidence="2">Plastid</location>
        <location evidence="2">Cyanelle membrane</location>
        <topology evidence="2">Multi-pass membrane protein</topology>
    </subcellularLocation>
</comment>
<comment type="similarity">
    <text evidence="2">Belongs to the ycf49 family.</text>
</comment>
<keyword id="KW-0194">Cyanelle</keyword>
<keyword id="KW-0472">Membrane</keyword>
<keyword id="KW-0934">Plastid</keyword>
<keyword id="KW-0812">Transmembrane</keyword>
<keyword id="KW-1133">Transmembrane helix</keyword>
<proteinExistence type="inferred from homology"/>
<dbReference type="EMBL" id="X17498">
    <property type="protein sequence ID" value="CAA35535.1"/>
    <property type="molecule type" value="Genomic_DNA"/>
</dbReference>
<dbReference type="EMBL" id="U30821">
    <property type="protein sequence ID" value="AAA81232.1"/>
    <property type="molecule type" value="Genomic_DNA"/>
</dbReference>
<dbReference type="PIR" id="S12809">
    <property type="entry name" value="S12809"/>
</dbReference>
<dbReference type="GO" id="GO:0033113">
    <property type="term" value="C:cyanelle membrane"/>
    <property type="evidence" value="ECO:0007669"/>
    <property type="project" value="UniProtKB-SubCell"/>
</dbReference>
<dbReference type="InterPro" id="IPR019634">
    <property type="entry name" value="Uncharacterised_Ycf49"/>
</dbReference>
<dbReference type="PANTHER" id="PTHR33833">
    <property type="entry name" value="NUCLEOLAR-LIKE PROTEIN-RELATED"/>
    <property type="match status" value="1"/>
</dbReference>
<dbReference type="PANTHER" id="PTHR33833:SF3">
    <property type="entry name" value="YCF49-LIKE PROTEIN"/>
    <property type="match status" value="1"/>
</dbReference>
<dbReference type="Pfam" id="PF10693">
    <property type="entry name" value="DUF2499"/>
    <property type="match status" value="1"/>
</dbReference>
<evidence type="ECO:0000255" key="1"/>
<evidence type="ECO:0000305" key="2"/>
<accession>P15811</accession>
<gene>
    <name type="primary">ycf49</name>
</gene>
<sequence>MNVLSYFTWFVHLSSVLEWLNIIYFFLLYTKLKKNLSLKTFIFSFFISFCSALCACTLHFFNNQSFYYFLINLQSFLTLFANITLYFSILIYKQQILKNQNY</sequence>
<feature type="chain" id="PRO_0000217376" description="Uncharacterized protein ycf49">
    <location>
        <begin position="1"/>
        <end position="102"/>
    </location>
</feature>
<feature type="transmembrane region" description="Helical" evidence="1">
    <location>
        <begin position="9"/>
        <end position="29"/>
    </location>
</feature>
<feature type="transmembrane region" description="Helical" evidence="1">
    <location>
        <begin position="41"/>
        <end position="61"/>
    </location>
</feature>
<feature type="transmembrane region" description="Helical" evidence="1">
    <location>
        <begin position="71"/>
        <end position="91"/>
    </location>
</feature>
<protein>
    <recommendedName>
        <fullName>Uncharacterized protein ycf49</fullName>
    </recommendedName>
    <alternativeName>
        <fullName>ORF102</fullName>
    </alternativeName>
</protein>